<accession>P08365</accession>
<accession>P76803</accession>
<accession>Q2M681</accession>
<sequence>MRITIKRWGNSAGMVIPNIVMKELNLQPGQSVEAQVSNNQLILTPISRRYSLDELLAQCDMNAAELSEQDVWGKSTPAGDEIW</sequence>
<reference key="1">
    <citation type="journal article" date="1993" name="J. Bacteriol.">
        <title>chpA and chpB, Escherichia coli chromosomal homologs of the pem locus responsible for stable maintenance of plasmid R100.</title>
        <authorList>
            <person name="Masuda Y."/>
            <person name="Miyakawa K."/>
            <person name="Nishimura Y."/>
            <person name="Ohtsubo E."/>
        </authorList>
    </citation>
    <scope>NUCLEOTIDE SEQUENCE [GENOMIC DNA]</scope>
    <scope>FUNCTION</scope>
    <scope>PROBABLE OPERON STRUCTURE</scope>
    <source>
        <strain>K12 / MC1000 / ATCC 39531</strain>
    </source>
</reference>
<reference key="2">
    <citation type="journal article" date="1986" name="J. Biol. Chem.">
        <title>Structural analysis of the ileR locus of Escherichia coli K12.</title>
        <authorList>
            <person name="Weiss D.L."/>
            <person name="Johnson D.I."/>
            <person name="Weith H.L."/>
            <person name="Somerville R.L."/>
        </authorList>
    </citation>
    <scope>NUCLEOTIDE SEQUENCE [GENOMIC DNA]</scope>
    <source>
        <strain>K12</strain>
    </source>
</reference>
<reference key="3">
    <citation type="journal article" date="1995" name="Nucleic Acids Res.">
        <title>Analysis of the Escherichia coli genome VI: DNA sequence of the region from 92.8 through 100 minutes.</title>
        <authorList>
            <person name="Burland V.D."/>
            <person name="Plunkett G. III"/>
            <person name="Sofia H.J."/>
            <person name="Daniels D.L."/>
            <person name="Blattner F.R."/>
        </authorList>
    </citation>
    <scope>NUCLEOTIDE SEQUENCE [LARGE SCALE GENOMIC DNA]</scope>
    <source>
        <strain>K12 / MG1655 / ATCC 47076</strain>
    </source>
</reference>
<reference key="4">
    <citation type="journal article" date="1997" name="Science">
        <title>The complete genome sequence of Escherichia coli K-12.</title>
        <authorList>
            <person name="Blattner F.R."/>
            <person name="Plunkett G. III"/>
            <person name="Bloch C.A."/>
            <person name="Perna N.T."/>
            <person name="Burland V."/>
            <person name="Riley M."/>
            <person name="Collado-Vides J."/>
            <person name="Glasner J.D."/>
            <person name="Rode C.K."/>
            <person name="Mayhew G.F."/>
            <person name="Gregor J."/>
            <person name="Davis N.W."/>
            <person name="Kirkpatrick H.A."/>
            <person name="Goeden M.A."/>
            <person name="Rose D.J."/>
            <person name="Mau B."/>
            <person name="Shao Y."/>
        </authorList>
    </citation>
    <scope>NUCLEOTIDE SEQUENCE [LARGE SCALE GENOMIC DNA]</scope>
    <source>
        <strain>K12 / MG1655 / ATCC 47076</strain>
    </source>
</reference>
<reference key="5">
    <citation type="journal article" date="2006" name="Mol. Syst. Biol.">
        <title>Highly accurate genome sequences of Escherichia coli K-12 strains MG1655 and W3110.</title>
        <authorList>
            <person name="Hayashi K."/>
            <person name="Morooka N."/>
            <person name="Yamamoto Y."/>
            <person name="Fujita K."/>
            <person name="Isono K."/>
            <person name="Choi S."/>
            <person name="Ohtsubo E."/>
            <person name="Baba T."/>
            <person name="Wanner B.L."/>
            <person name="Mori H."/>
            <person name="Horiuchi T."/>
        </authorList>
    </citation>
    <scope>NUCLEOTIDE SEQUENCE [LARGE SCALE GENOMIC DNA]</scope>
    <source>
        <strain>K12 / W3110 / ATCC 27325 / DSM 5911</strain>
    </source>
</reference>
<reference key="6">
    <citation type="journal article" date="1994" name="J. Bacteriol.">
        <title>Mapping and disruption of the chpB locus in Escherichia coli.</title>
        <authorList>
            <person name="Masuda Y."/>
            <person name="Ohtsubo E."/>
        </authorList>
    </citation>
    <scope>GENE MAPPING</scope>
    <scope>DISRUPTION PHENOTYPE</scope>
    <source>
        <strain>K12 / W3110 / ATCC 27325 / DSM 5911</strain>
    </source>
</reference>
<reference key="7">
    <citation type="journal article" date="2006" name="J. Mol. Biol.">
        <title>Model for RNA binding and the catalytic site of the RNase Kid of the bacterial parD toxin-antitoxin system.</title>
        <authorList>
            <person name="Kamphuis M.B."/>
            <person name="Bonvin A.M."/>
            <person name="Monti M.C."/>
            <person name="Lemonnier M."/>
            <person name="Munoz-Gomez A."/>
            <person name="van den Heuvel R.H."/>
            <person name="Diaz-Orejas R."/>
            <person name="Boelens R."/>
        </authorList>
    </citation>
    <scope>FUNCTION</scope>
    <scope>INTERACTION WITH CHPB</scope>
</reference>
<dbReference type="EMBL" id="D16451">
    <property type="protein sequence ID" value="BAA41179.1"/>
    <property type="molecule type" value="Genomic_DNA"/>
</dbReference>
<dbReference type="EMBL" id="M14018">
    <property type="protein sequence ID" value="AAA24011.1"/>
    <property type="status" value="ALT_INIT"/>
    <property type="molecule type" value="Genomic_DNA"/>
</dbReference>
<dbReference type="EMBL" id="U14003">
    <property type="protein sequence ID" value="AAA97121.1"/>
    <property type="status" value="ALT_INIT"/>
    <property type="molecule type" value="Genomic_DNA"/>
</dbReference>
<dbReference type="EMBL" id="U00096">
    <property type="protein sequence ID" value="AAC77181.2"/>
    <property type="molecule type" value="Genomic_DNA"/>
</dbReference>
<dbReference type="EMBL" id="AP009048">
    <property type="protein sequence ID" value="BAE78225.1"/>
    <property type="molecule type" value="Genomic_DNA"/>
</dbReference>
<dbReference type="PIR" id="S56450">
    <property type="entry name" value="QQECR8"/>
</dbReference>
<dbReference type="RefSeq" id="NP_418645.2">
    <property type="nucleotide sequence ID" value="NC_000913.3"/>
</dbReference>
<dbReference type="RefSeq" id="WP_001223208.1">
    <property type="nucleotide sequence ID" value="NZ_SSZK01000013.1"/>
</dbReference>
<dbReference type="SMR" id="P08365"/>
<dbReference type="BioGRID" id="4259310">
    <property type="interactions" value="133"/>
</dbReference>
<dbReference type="ComplexPortal" id="CPX-4063">
    <property type="entry name" value="ChpBS toxin-antitoxin complex"/>
</dbReference>
<dbReference type="DIP" id="DIP-9280N"/>
<dbReference type="FunCoup" id="P08365">
    <property type="interactions" value="7"/>
</dbReference>
<dbReference type="IntAct" id="P08365">
    <property type="interactions" value="1"/>
</dbReference>
<dbReference type="STRING" id="511145.b4224"/>
<dbReference type="jPOST" id="P08365"/>
<dbReference type="PaxDb" id="511145-b4224"/>
<dbReference type="EnsemblBacteria" id="AAC77181">
    <property type="protein sequence ID" value="AAC77181"/>
    <property type="gene ID" value="b4224"/>
</dbReference>
<dbReference type="GeneID" id="75202463"/>
<dbReference type="GeneID" id="948739"/>
<dbReference type="KEGG" id="ecj:JW5750"/>
<dbReference type="KEGG" id="eco:b4224"/>
<dbReference type="KEGG" id="ecoc:C3026_22810"/>
<dbReference type="PATRIC" id="fig|1411691.4.peg.2477"/>
<dbReference type="EchoBASE" id="EB1230"/>
<dbReference type="eggNOG" id="COG2336">
    <property type="taxonomic scope" value="Bacteria"/>
</dbReference>
<dbReference type="HOGENOM" id="CLU_150554_2_2_6"/>
<dbReference type="InParanoid" id="P08365"/>
<dbReference type="OMA" id="EQMHASV"/>
<dbReference type="OrthoDB" id="9795766at2"/>
<dbReference type="PhylomeDB" id="P08365"/>
<dbReference type="BioCyc" id="EcoCyc:EG11250-MONOMER"/>
<dbReference type="BioCyc" id="MetaCyc:EG11250-MONOMER"/>
<dbReference type="PRO" id="PR:P08365"/>
<dbReference type="Proteomes" id="UP000000625">
    <property type="component" value="Chromosome"/>
</dbReference>
<dbReference type="GO" id="GO:0110001">
    <property type="term" value="C:toxin-antitoxin complex"/>
    <property type="evidence" value="ECO:0000353"/>
    <property type="project" value="ComplexPortal"/>
</dbReference>
<dbReference type="GO" id="GO:0003677">
    <property type="term" value="F:DNA binding"/>
    <property type="evidence" value="ECO:0007669"/>
    <property type="project" value="UniProtKB-KW"/>
</dbReference>
<dbReference type="GO" id="GO:0097351">
    <property type="term" value="F:toxin sequestering activity"/>
    <property type="evidence" value="ECO:0007669"/>
    <property type="project" value="InterPro"/>
</dbReference>
<dbReference type="GO" id="GO:0030307">
    <property type="term" value="P:positive regulation of cell growth"/>
    <property type="evidence" value="ECO:0000315"/>
    <property type="project" value="EcoCyc"/>
</dbReference>
<dbReference type="GO" id="GO:0006355">
    <property type="term" value="P:regulation of DNA-templated transcription"/>
    <property type="evidence" value="ECO:0000303"/>
    <property type="project" value="ComplexPortal"/>
</dbReference>
<dbReference type="GO" id="GO:0040008">
    <property type="term" value="P:regulation of growth"/>
    <property type="evidence" value="ECO:0000303"/>
    <property type="project" value="ComplexPortal"/>
</dbReference>
<dbReference type="GO" id="GO:0044010">
    <property type="term" value="P:single-species biofilm formation"/>
    <property type="evidence" value="ECO:0000303"/>
    <property type="project" value="ComplexPortal"/>
</dbReference>
<dbReference type="FunFam" id="2.10.260.10:FF:000004">
    <property type="entry name" value="Antitoxin ChpS"/>
    <property type="match status" value="1"/>
</dbReference>
<dbReference type="Gene3D" id="2.10.260.10">
    <property type="match status" value="1"/>
</dbReference>
<dbReference type="InterPro" id="IPR039052">
    <property type="entry name" value="Antitox_PemI-like"/>
</dbReference>
<dbReference type="InterPro" id="IPR007159">
    <property type="entry name" value="SpoVT-AbrB_dom"/>
</dbReference>
<dbReference type="InterPro" id="IPR037914">
    <property type="entry name" value="SpoVT-AbrB_sf"/>
</dbReference>
<dbReference type="NCBIfam" id="NF008463">
    <property type="entry name" value="PRK11347.1"/>
    <property type="match status" value="1"/>
</dbReference>
<dbReference type="PANTHER" id="PTHR40516">
    <property type="entry name" value="ANTITOXIN CHPS-RELATED"/>
    <property type="match status" value="1"/>
</dbReference>
<dbReference type="PANTHER" id="PTHR40516:SF1">
    <property type="entry name" value="ANTITOXIN CHPS-RELATED"/>
    <property type="match status" value="1"/>
</dbReference>
<dbReference type="Pfam" id="PF04014">
    <property type="entry name" value="MazE_antitoxin"/>
    <property type="match status" value="1"/>
</dbReference>
<dbReference type="SMART" id="SM00966">
    <property type="entry name" value="SpoVT_AbrB"/>
    <property type="match status" value="1"/>
</dbReference>
<dbReference type="SUPFAM" id="SSF89447">
    <property type="entry name" value="AbrB/MazE/MraZ-like"/>
    <property type="match status" value="1"/>
</dbReference>
<dbReference type="PROSITE" id="PS51740">
    <property type="entry name" value="SPOVT_ABRB"/>
    <property type="match status" value="1"/>
</dbReference>
<organism>
    <name type="scientific">Escherichia coli (strain K12)</name>
    <dbReference type="NCBI Taxonomy" id="83333"/>
    <lineage>
        <taxon>Bacteria</taxon>
        <taxon>Pseudomonadati</taxon>
        <taxon>Pseudomonadota</taxon>
        <taxon>Gammaproteobacteria</taxon>
        <taxon>Enterobacterales</taxon>
        <taxon>Enterobacteriaceae</taxon>
        <taxon>Escherichia</taxon>
    </lineage>
</organism>
<proteinExistence type="evidence at protein level"/>
<protein>
    <recommendedName>
        <fullName>Antitoxin ChpS</fullName>
    </recommendedName>
</protein>
<comment type="function">
    <text evidence="2 4">Antitoxin component of a type II toxin-antitoxin (TA) system. May be involved in the regulation of cell growth. It acts as a suppressor of the endoribonuclease (inhibitory function) of ChpB protein. Both ChpS and ChpB probably bind to the promoter region of the chpS-chpB operon to autoregulate their synthesis.</text>
</comment>
<comment type="subunit">
    <text evidence="2">Interacts with ChpB, inhibiting its endoribonuclease activity.</text>
</comment>
<comment type="interaction">
    <interactant intactId="EBI-556499">
        <id>P08365</id>
    </interactant>
    <interactant intactId="EBI-555015">
        <id>P0A9M8</id>
        <label>pta</label>
    </interactant>
    <organismsDiffer>false</organismsDiffer>
    <experiments>3</experiments>
</comment>
<comment type="induction">
    <text evidence="4">Part of the chpS-chpB operon.</text>
</comment>
<comment type="disruption phenotype">
    <text evidence="3">No visible phenotype.</text>
</comment>
<comment type="similarity">
    <text evidence="5">Belongs to the PemI family.</text>
</comment>
<comment type="sequence caution" evidence="5">
    <conflict type="erroneous initiation">
        <sequence resource="EMBL-CDS" id="AAA24011"/>
    </conflict>
    <text>Extended N-terminus.</text>
</comment>
<comment type="sequence caution" evidence="5">
    <conflict type="erroneous initiation">
        <sequence resource="EMBL-CDS" id="AAA97121"/>
    </conflict>
    <text>Extended N-terminus.</text>
</comment>
<name>CHPS_ECOLI</name>
<gene>
    <name type="primary">chpS</name>
    <name type="synonym">chpBI</name>
    <name type="synonym">yjfB</name>
    <name type="ordered locus">b4224</name>
    <name type="ordered locus">JW5750</name>
</gene>
<keyword id="KW-0238">DNA-binding</keyword>
<keyword id="KW-1185">Reference proteome</keyword>
<keyword id="KW-0678">Repressor</keyword>
<keyword id="KW-1277">Toxin-antitoxin system</keyword>
<keyword id="KW-0804">Transcription</keyword>
<keyword id="KW-0805">Transcription regulation</keyword>
<evidence type="ECO:0000255" key="1">
    <source>
        <dbReference type="PROSITE-ProRule" id="PRU01076"/>
    </source>
</evidence>
<evidence type="ECO:0000269" key="2">
    <source>
    </source>
</evidence>
<evidence type="ECO:0000269" key="3">
    <source>
    </source>
</evidence>
<evidence type="ECO:0000269" key="4">
    <source>
    </source>
</evidence>
<evidence type="ECO:0000305" key="5"/>
<feature type="chain" id="PRO_0000089651" description="Antitoxin ChpS">
    <location>
        <begin position="1"/>
        <end position="83"/>
    </location>
</feature>
<feature type="domain" description="SpoVT-AbrB" evidence="1">
    <location>
        <begin position="3"/>
        <end position="48"/>
    </location>
</feature>